<organism>
    <name type="scientific">Bdellovibrio bacteriovorus (strain ATCC 15356 / DSM 50701 / NCIMB 9529 / HD100)</name>
    <dbReference type="NCBI Taxonomy" id="264462"/>
    <lineage>
        <taxon>Bacteria</taxon>
        <taxon>Pseudomonadati</taxon>
        <taxon>Bdellovibrionota</taxon>
        <taxon>Bdellovibrionia</taxon>
        <taxon>Bdellovibrionales</taxon>
        <taxon>Pseudobdellovibrionaceae</taxon>
        <taxon>Bdellovibrio</taxon>
    </lineage>
</organism>
<sequence>MKSSEIRNAFIKYFEKNGHKVVPSSSLIPENDPTLLFANAGMNQFKNTFLGLEKRDYSRAVTAQKCVRAGGKHNDLENVGFTARHHTFFEMVGNFSFGDYFKKDAIHFAWEFLTKELAIPKEKLYVTVHISDDEAADIWHNQEGVPRERIFRFDKDNFWKMGDTGPCGPCTEIFYDHGPKAGTISDPFKGIEAGEDRFVEIWNLVFMQYFENPPGTLTPLPKPSVDTGGGLERMSAAMQGVFNNYDTDLFQPMIQLACKIGNIEYISDKEVLAKNPAAAEVTSALRVLADHCRSTSFLIADGALPSNEGRGYVLRRIMRRAIRYGRKLSADKSFLPGMAEALIESMGSVYPELKTRRDHILNTIRDEEDRFIATLDKGTAILEDELKKAKSKGIKELSGEVVFRMYDTYGFPADLTRVIANEQGIEVNEAAFEKEMEDNRAKSKASWKGKSMGADEAHMIKFAKDYLQSGKSVTFLGYEGTIGDGKVMGLSNGQAEVQELKTGDTGLMILNATTFYGEGGGQSGDVGYIMHDTNRARVINTTKIDDIVLHHVEIEHGSFKVGTAVVTGVDPVERRNTAANHSATHLLHAALRKVLGTHVTQAGSLVDSQKTRFDFTHNKPVSSEEIKKIEDLVNEQIARCNPVQTEMMSHKAALEKGAMALFGEKYASDVRVLTMGDFSCELCGGTHVKNTSEIRLFKIVSEAGVSSGVRRIEAITADNALQYMMSAVTHLDDALAAAGFQKSPHYIKHLETTGETATLANRVESLKDQVKQLEKEMKKLQGGQVNVDDLAANALTFKTKAGASAKLVLADVPLDDRQVLAEVTDHLKNKIQSGIVVVVGQGDGSHPIIVSVSKEISGETKAGDLLKEVAGVMGGKGGGRPDFAQGAAPNRAQLNEAFSKVKSMLGL</sequence>
<dbReference type="EC" id="6.1.1.7" evidence="1"/>
<dbReference type="EMBL" id="BX842647">
    <property type="protein sequence ID" value="CAE78480.1"/>
    <property type="molecule type" value="Genomic_DNA"/>
</dbReference>
<dbReference type="RefSeq" id="WP_011163082.1">
    <property type="nucleotide sequence ID" value="NC_005363.1"/>
</dbReference>
<dbReference type="SMR" id="P61698"/>
<dbReference type="STRING" id="264462.Bd0501"/>
<dbReference type="GeneID" id="93011610"/>
<dbReference type="KEGG" id="bba:Bd0501"/>
<dbReference type="eggNOG" id="COG0013">
    <property type="taxonomic scope" value="Bacteria"/>
</dbReference>
<dbReference type="HOGENOM" id="CLU_004485_1_1_7"/>
<dbReference type="Proteomes" id="UP000008080">
    <property type="component" value="Chromosome"/>
</dbReference>
<dbReference type="GO" id="GO:0005829">
    <property type="term" value="C:cytosol"/>
    <property type="evidence" value="ECO:0007669"/>
    <property type="project" value="TreeGrafter"/>
</dbReference>
<dbReference type="GO" id="GO:0004813">
    <property type="term" value="F:alanine-tRNA ligase activity"/>
    <property type="evidence" value="ECO:0007669"/>
    <property type="project" value="UniProtKB-UniRule"/>
</dbReference>
<dbReference type="GO" id="GO:0002161">
    <property type="term" value="F:aminoacyl-tRNA deacylase activity"/>
    <property type="evidence" value="ECO:0007669"/>
    <property type="project" value="TreeGrafter"/>
</dbReference>
<dbReference type="GO" id="GO:0005524">
    <property type="term" value="F:ATP binding"/>
    <property type="evidence" value="ECO:0007669"/>
    <property type="project" value="UniProtKB-UniRule"/>
</dbReference>
<dbReference type="GO" id="GO:0000049">
    <property type="term" value="F:tRNA binding"/>
    <property type="evidence" value="ECO:0007669"/>
    <property type="project" value="UniProtKB-KW"/>
</dbReference>
<dbReference type="GO" id="GO:0008270">
    <property type="term" value="F:zinc ion binding"/>
    <property type="evidence" value="ECO:0007669"/>
    <property type="project" value="UniProtKB-UniRule"/>
</dbReference>
<dbReference type="GO" id="GO:0006419">
    <property type="term" value="P:alanyl-tRNA aminoacylation"/>
    <property type="evidence" value="ECO:0007669"/>
    <property type="project" value="UniProtKB-UniRule"/>
</dbReference>
<dbReference type="GO" id="GO:0045892">
    <property type="term" value="P:negative regulation of DNA-templated transcription"/>
    <property type="evidence" value="ECO:0007669"/>
    <property type="project" value="TreeGrafter"/>
</dbReference>
<dbReference type="CDD" id="cd00673">
    <property type="entry name" value="AlaRS_core"/>
    <property type="match status" value="1"/>
</dbReference>
<dbReference type="FunFam" id="3.10.310.40:FF:000001">
    <property type="entry name" value="Alanine--tRNA ligase"/>
    <property type="match status" value="1"/>
</dbReference>
<dbReference type="FunFam" id="3.30.54.20:FF:000001">
    <property type="entry name" value="Alanine--tRNA ligase"/>
    <property type="match status" value="1"/>
</dbReference>
<dbReference type="FunFam" id="3.30.930.10:FF:000004">
    <property type="entry name" value="Alanine--tRNA ligase"/>
    <property type="match status" value="1"/>
</dbReference>
<dbReference type="FunFam" id="3.30.980.10:FF:000004">
    <property type="entry name" value="Alanine--tRNA ligase, cytoplasmic"/>
    <property type="match status" value="1"/>
</dbReference>
<dbReference type="Gene3D" id="2.40.30.130">
    <property type="match status" value="1"/>
</dbReference>
<dbReference type="Gene3D" id="3.10.310.40">
    <property type="match status" value="1"/>
</dbReference>
<dbReference type="Gene3D" id="3.30.54.20">
    <property type="match status" value="1"/>
</dbReference>
<dbReference type="Gene3D" id="3.30.930.10">
    <property type="entry name" value="Bira Bifunctional Protein, Domain 2"/>
    <property type="match status" value="1"/>
</dbReference>
<dbReference type="Gene3D" id="3.30.980.10">
    <property type="entry name" value="Threonyl-trna Synthetase, Chain A, domain 2"/>
    <property type="match status" value="1"/>
</dbReference>
<dbReference type="HAMAP" id="MF_00036_B">
    <property type="entry name" value="Ala_tRNA_synth_B"/>
    <property type="match status" value="1"/>
</dbReference>
<dbReference type="InterPro" id="IPR045864">
    <property type="entry name" value="aa-tRNA-synth_II/BPL/LPL"/>
</dbReference>
<dbReference type="InterPro" id="IPR002318">
    <property type="entry name" value="Ala-tRNA-lgiase_IIc"/>
</dbReference>
<dbReference type="InterPro" id="IPR018162">
    <property type="entry name" value="Ala-tRNA-ligase_IIc_anticod-bd"/>
</dbReference>
<dbReference type="InterPro" id="IPR018165">
    <property type="entry name" value="Ala-tRNA-synth_IIc_core"/>
</dbReference>
<dbReference type="InterPro" id="IPR018164">
    <property type="entry name" value="Ala-tRNA-synth_IIc_N"/>
</dbReference>
<dbReference type="InterPro" id="IPR050058">
    <property type="entry name" value="Ala-tRNA_ligase"/>
</dbReference>
<dbReference type="InterPro" id="IPR023033">
    <property type="entry name" value="Ala_tRNA_ligase_euk/bac"/>
</dbReference>
<dbReference type="InterPro" id="IPR003156">
    <property type="entry name" value="DHHA1_dom"/>
</dbReference>
<dbReference type="InterPro" id="IPR018163">
    <property type="entry name" value="Thr/Ala-tRNA-synth_IIc_edit"/>
</dbReference>
<dbReference type="InterPro" id="IPR009000">
    <property type="entry name" value="Transl_B-barrel_sf"/>
</dbReference>
<dbReference type="InterPro" id="IPR012947">
    <property type="entry name" value="tRNA_SAD"/>
</dbReference>
<dbReference type="NCBIfam" id="TIGR00344">
    <property type="entry name" value="alaS"/>
    <property type="match status" value="1"/>
</dbReference>
<dbReference type="PANTHER" id="PTHR11777:SF9">
    <property type="entry name" value="ALANINE--TRNA LIGASE, CYTOPLASMIC"/>
    <property type="match status" value="1"/>
</dbReference>
<dbReference type="PANTHER" id="PTHR11777">
    <property type="entry name" value="ALANYL-TRNA SYNTHETASE"/>
    <property type="match status" value="1"/>
</dbReference>
<dbReference type="Pfam" id="PF02272">
    <property type="entry name" value="DHHA1"/>
    <property type="match status" value="1"/>
</dbReference>
<dbReference type="Pfam" id="PF01411">
    <property type="entry name" value="tRNA-synt_2c"/>
    <property type="match status" value="1"/>
</dbReference>
<dbReference type="Pfam" id="PF07973">
    <property type="entry name" value="tRNA_SAD"/>
    <property type="match status" value="1"/>
</dbReference>
<dbReference type="PRINTS" id="PR00980">
    <property type="entry name" value="TRNASYNTHALA"/>
</dbReference>
<dbReference type="SMART" id="SM00863">
    <property type="entry name" value="tRNA_SAD"/>
    <property type="match status" value="1"/>
</dbReference>
<dbReference type="SUPFAM" id="SSF55681">
    <property type="entry name" value="Class II aaRS and biotin synthetases"/>
    <property type="match status" value="1"/>
</dbReference>
<dbReference type="SUPFAM" id="SSF101353">
    <property type="entry name" value="Putative anticodon-binding domain of alanyl-tRNA synthetase (AlaRS)"/>
    <property type="match status" value="1"/>
</dbReference>
<dbReference type="SUPFAM" id="SSF55186">
    <property type="entry name" value="ThrRS/AlaRS common domain"/>
    <property type="match status" value="1"/>
</dbReference>
<dbReference type="SUPFAM" id="SSF50447">
    <property type="entry name" value="Translation proteins"/>
    <property type="match status" value="1"/>
</dbReference>
<dbReference type="PROSITE" id="PS50860">
    <property type="entry name" value="AA_TRNA_LIGASE_II_ALA"/>
    <property type="match status" value="1"/>
</dbReference>
<keyword id="KW-0030">Aminoacyl-tRNA synthetase</keyword>
<keyword id="KW-0067">ATP-binding</keyword>
<keyword id="KW-0963">Cytoplasm</keyword>
<keyword id="KW-0436">Ligase</keyword>
<keyword id="KW-0479">Metal-binding</keyword>
<keyword id="KW-0547">Nucleotide-binding</keyword>
<keyword id="KW-0648">Protein biosynthesis</keyword>
<keyword id="KW-1185">Reference proteome</keyword>
<keyword id="KW-0694">RNA-binding</keyword>
<keyword id="KW-0820">tRNA-binding</keyword>
<keyword id="KW-0862">Zinc</keyword>
<comment type="function">
    <text evidence="1">Catalyzes the attachment of alanine to tRNA(Ala) in a two-step reaction: alanine is first activated by ATP to form Ala-AMP and then transferred to the acceptor end of tRNA(Ala). Also edits incorrectly charged Ser-tRNA(Ala) and Gly-tRNA(Ala) via its editing domain.</text>
</comment>
<comment type="catalytic activity">
    <reaction evidence="1">
        <text>tRNA(Ala) + L-alanine + ATP = L-alanyl-tRNA(Ala) + AMP + diphosphate</text>
        <dbReference type="Rhea" id="RHEA:12540"/>
        <dbReference type="Rhea" id="RHEA-COMP:9657"/>
        <dbReference type="Rhea" id="RHEA-COMP:9923"/>
        <dbReference type="ChEBI" id="CHEBI:30616"/>
        <dbReference type="ChEBI" id="CHEBI:33019"/>
        <dbReference type="ChEBI" id="CHEBI:57972"/>
        <dbReference type="ChEBI" id="CHEBI:78442"/>
        <dbReference type="ChEBI" id="CHEBI:78497"/>
        <dbReference type="ChEBI" id="CHEBI:456215"/>
        <dbReference type="EC" id="6.1.1.7"/>
    </reaction>
</comment>
<comment type="cofactor">
    <cofactor evidence="1">
        <name>Zn(2+)</name>
        <dbReference type="ChEBI" id="CHEBI:29105"/>
    </cofactor>
    <text evidence="1">Binds 1 zinc ion per subunit.</text>
</comment>
<comment type="subcellular location">
    <subcellularLocation>
        <location evidence="1">Cytoplasm</location>
    </subcellularLocation>
</comment>
<comment type="domain">
    <text evidence="1">Consists of three domains; the N-terminal catalytic domain, the editing domain and the C-terminal C-Ala domain. The editing domain removes incorrectly charged amino acids, while the C-Ala domain, along with tRNA(Ala), serves as a bridge to cooperatively bring together the editing and aminoacylation centers thus stimulating deacylation of misacylated tRNAs.</text>
</comment>
<comment type="similarity">
    <text evidence="1">Belongs to the class-II aminoacyl-tRNA synthetase family.</text>
</comment>
<feature type="chain" id="PRO_0000075065" description="Alanine--tRNA ligase">
    <location>
        <begin position="1"/>
        <end position="907"/>
    </location>
</feature>
<feature type="binding site" evidence="1">
    <location>
        <position position="581"/>
    </location>
    <ligand>
        <name>Zn(2+)</name>
        <dbReference type="ChEBI" id="CHEBI:29105"/>
    </ligand>
</feature>
<feature type="binding site" evidence="1">
    <location>
        <position position="585"/>
    </location>
    <ligand>
        <name>Zn(2+)</name>
        <dbReference type="ChEBI" id="CHEBI:29105"/>
    </ligand>
</feature>
<feature type="binding site" evidence="1">
    <location>
        <position position="683"/>
    </location>
    <ligand>
        <name>Zn(2+)</name>
        <dbReference type="ChEBI" id="CHEBI:29105"/>
    </ligand>
</feature>
<feature type="binding site" evidence="1">
    <location>
        <position position="687"/>
    </location>
    <ligand>
        <name>Zn(2+)</name>
        <dbReference type="ChEBI" id="CHEBI:29105"/>
    </ligand>
</feature>
<name>SYA_BDEBA</name>
<evidence type="ECO:0000255" key="1">
    <source>
        <dbReference type="HAMAP-Rule" id="MF_00036"/>
    </source>
</evidence>
<gene>
    <name evidence="1" type="primary">alaS</name>
    <name type="ordered locus">Bd0501</name>
</gene>
<accession>P61698</accession>
<reference key="1">
    <citation type="journal article" date="2004" name="Science">
        <title>A predator unmasked: life cycle of Bdellovibrio bacteriovorus from a genomic perspective.</title>
        <authorList>
            <person name="Rendulic S."/>
            <person name="Jagtap P."/>
            <person name="Rosinus A."/>
            <person name="Eppinger M."/>
            <person name="Baar C."/>
            <person name="Lanz C."/>
            <person name="Keller H."/>
            <person name="Lambert C."/>
            <person name="Evans K.J."/>
            <person name="Goesmann A."/>
            <person name="Meyer F."/>
            <person name="Sockett R.E."/>
            <person name="Schuster S.C."/>
        </authorList>
    </citation>
    <scope>NUCLEOTIDE SEQUENCE [LARGE SCALE GENOMIC DNA]</scope>
    <source>
        <strain>ATCC 15356 / DSM 50701 / NCIMB 9529 / HD100</strain>
    </source>
</reference>
<proteinExistence type="inferred from homology"/>
<protein>
    <recommendedName>
        <fullName evidence="1">Alanine--tRNA ligase</fullName>
        <ecNumber evidence="1">6.1.1.7</ecNumber>
    </recommendedName>
    <alternativeName>
        <fullName evidence="1">Alanyl-tRNA synthetase</fullName>
        <shortName evidence="1">AlaRS</shortName>
    </alternativeName>
</protein>